<keyword id="KW-1035">Host cytoplasm</keyword>
<keyword id="KW-1185">Reference proteome</keyword>
<evidence type="ECO:0000269" key="1">
    <source>
    </source>
</evidence>
<evidence type="ECO:0000269" key="2">
    <source>
    </source>
</evidence>
<evidence type="ECO:0000305" key="3"/>
<organismHost>
    <name type="scientific">Homo sapiens</name>
    <name type="common">Human</name>
    <dbReference type="NCBI Taxonomy" id="9606"/>
</organismHost>
<protein>
    <recommendedName>
        <fullName>Uncharacterized protein UL21A</fullName>
    </recommendedName>
</protein>
<gene>
    <name type="primary">UL21A</name>
</gene>
<comment type="function">
    <text evidence="2">Required for efficient viral DNA synthesis and the late accumulation of viral IE transcripts.</text>
</comment>
<comment type="subcellular location">
    <subcellularLocation>
        <location evidence="1">Host cytoplasm</location>
    </subcellularLocation>
</comment>
<comment type="similarity">
    <text evidence="3">Belongs to the HHV-5 UL21A protein family.</text>
</comment>
<reference key="1">
    <citation type="journal article" date="1990" name="Curr. Top. Microbiol. Immunol.">
        <title>Analysis of the protein-coding content of the sequence of human cytomegalovirus strain AD169.</title>
        <authorList>
            <person name="Chee M.S."/>
            <person name="Bankier A.T."/>
            <person name="Beck S."/>
            <person name="Bohni R."/>
            <person name="Brown C.M."/>
            <person name="Cerny R."/>
            <person name="Horsnell T."/>
            <person name="Hutchison C.A. III"/>
            <person name="Kouzarides T."/>
            <person name="Martignetti J.A."/>
            <person name="Preddie E."/>
            <person name="Satchwell S.C."/>
            <person name="Tomlinson P."/>
            <person name="Weston K.M."/>
            <person name="Barrell B.G."/>
        </authorList>
    </citation>
    <scope>NUCLEOTIDE SEQUENCE [LARGE SCALE GENOMIC DNA]</scope>
</reference>
<reference key="2">
    <citation type="journal article" date="2003" name="J. Gen. Virol.">
        <title>The human cytomegalovirus genome revisited: comparison with the chimpanzee cytomegalovirus genome.</title>
        <authorList>
            <person name="Davison A.J."/>
            <person name="Dolan A."/>
            <person name="Akter P."/>
            <person name="Addison C."/>
            <person name="Dargan D.J."/>
            <person name="Alcendor D.J."/>
            <person name="McGeoch D.J."/>
            <person name="Hayward G.S."/>
        </authorList>
    </citation>
    <scope>GENOME REANNOTATION</scope>
</reference>
<reference key="3">
    <citation type="journal article" date="2003" name="J. Gen. Virol.">
        <authorList>
            <person name="Davison A.J."/>
            <person name="Dolan A."/>
            <person name="Akter P."/>
            <person name="Addison C."/>
            <person name="Dargan D.J."/>
            <person name="Alcendor D.J."/>
            <person name="McGeoch D.J."/>
            <person name="Hayward G.S."/>
        </authorList>
    </citation>
    <scope>ERRATUM OF PUBMED:12533697</scope>
</reference>
<reference key="4">
    <citation type="journal article" date="2010" name="J. Virol.">
        <title>Human cytomegalovirus gene UL21a encodes a short-lived cytoplasmic protein and facilitates virus replication in fibroblasts.</title>
        <authorList>
            <person name="Fehr A.R."/>
            <person name="Yu D."/>
        </authorList>
    </citation>
    <scope>SUBCELLULAR LOCATION</scope>
</reference>
<reference key="5">
    <citation type="journal article" date="2011" name="J. Virol.">
        <title>Human cytomegalovirus early protein pUL21a promotes efficient viral DNA synthesis and the late accumulation of immediate-early transcripts.</title>
        <authorList>
            <person name="Fehr A.R."/>
            <person name="Yu D."/>
        </authorList>
    </citation>
    <scope>FUNCTION</scope>
</reference>
<name>UL21A_HCMVA</name>
<dbReference type="EMBL" id="X17403">
    <property type="status" value="NOT_ANNOTATED_CDS"/>
    <property type="molecule type" value="Genomic_DNA"/>
</dbReference>
<dbReference type="EMBL" id="BK000394">
    <property type="protein sequence ID" value="DAA00125.1"/>
    <property type="molecule type" value="Genomic_DNA"/>
</dbReference>
<dbReference type="RefSeq" id="YP_081480.1">
    <property type="nucleotide sequence ID" value="NC_006273.2"/>
</dbReference>
<dbReference type="BioGRID" id="1678001">
    <property type="interactions" value="3"/>
</dbReference>
<dbReference type="DNASU" id="3077448"/>
<dbReference type="GeneID" id="3077448"/>
<dbReference type="KEGG" id="vg:3077448"/>
<dbReference type="Proteomes" id="UP000008991">
    <property type="component" value="Segment"/>
</dbReference>
<dbReference type="Proteomes" id="UP000008992">
    <property type="component" value="Segment"/>
</dbReference>
<dbReference type="GO" id="GO:0030430">
    <property type="term" value="C:host cell cytoplasm"/>
    <property type="evidence" value="ECO:0007669"/>
    <property type="project" value="UniProtKB-SubCell"/>
</dbReference>
<dbReference type="InterPro" id="IPR035112">
    <property type="entry name" value="UL21a"/>
</dbReference>
<dbReference type="Pfam" id="PF17636">
    <property type="entry name" value="UL21a"/>
    <property type="match status" value="1"/>
</dbReference>
<accession>Q7M6R1</accession>
<organism>
    <name type="scientific">Human cytomegalovirus (strain AD169)</name>
    <name type="common">HHV-5</name>
    <name type="synonym">Human herpesvirus 5</name>
    <dbReference type="NCBI Taxonomy" id="10360"/>
    <lineage>
        <taxon>Viruses</taxon>
        <taxon>Duplodnaviria</taxon>
        <taxon>Heunggongvirae</taxon>
        <taxon>Peploviricota</taxon>
        <taxon>Herviviricetes</taxon>
        <taxon>Herpesvirales</taxon>
        <taxon>Orthoherpesviridae</taxon>
        <taxon>Betaherpesvirinae</taxon>
        <taxon>Cytomegalovirus</taxon>
        <taxon>Cytomegalovirus humanbeta5</taxon>
        <taxon>Human cytomegalovirus</taxon>
    </lineage>
</organism>
<feature type="chain" id="PRO_0000115313" description="Uncharacterized protein UL21A">
    <location>
        <begin position="1"/>
        <end position="123"/>
    </location>
</feature>
<proteinExistence type="inferred from homology"/>
<sequence length="123" mass="14275">MGGSPVPQLTTVTQGLMPSVRMDFRARRPLRRLAFYAPRARRRLFQNHIHPEQRRVLVGEGDEEMLPDLPMEIDIVIDRPPQQPLPNPLVLLLDDVPPHVPGFAPYRVPRPHPMIPEEHWDQF</sequence>